<reference key="1">
    <citation type="journal article" date="2011" name="Proc. Natl. Acad. Sci. U.S.A.">
        <title>Genomic anatomy of Escherichia coli O157:H7 outbreaks.</title>
        <authorList>
            <person name="Eppinger M."/>
            <person name="Mammel M.K."/>
            <person name="Leclerc J.E."/>
            <person name="Ravel J."/>
            <person name="Cebula T.A."/>
        </authorList>
    </citation>
    <scope>NUCLEOTIDE SEQUENCE [LARGE SCALE GENOMIC DNA]</scope>
    <source>
        <strain>EC4115 / EHEC</strain>
    </source>
</reference>
<keyword id="KW-0028">Amino-acid biosynthesis</keyword>
<keyword id="KW-0057">Aromatic amino acid biosynthesis</keyword>
<keyword id="KW-0520">NAD</keyword>
<keyword id="KW-0521">NADP</keyword>
<keyword id="KW-0560">Oxidoreductase</keyword>
<evidence type="ECO:0000255" key="1">
    <source>
        <dbReference type="HAMAP-Rule" id="MF_01578"/>
    </source>
</evidence>
<dbReference type="EC" id="1.1.1.282" evidence="1"/>
<dbReference type="EMBL" id="CP001164">
    <property type="protein sequence ID" value="ACI35337.1"/>
    <property type="molecule type" value="Genomic_DNA"/>
</dbReference>
<dbReference type="RefSeq" id="WP_000383479.1">
    <property type="nucleotide sequence ID" value="NC_011353.1"/>
</dbReference>
<dbReference type="SMR" id="B5YPX9"/>
<dbReference type="KEGG" id="ecf:ECH74115_2408"/>
<dbReference type="HOGENOM" id="CLU_044063_4_4_6"/>
<dbReference type="UniPathway" id="UPA00053">
    <property type="reaction ID" value="UER00087"/>
</dbReference>
<dbReference type="GO" id="GO:0030266">
    <property type="term" value="F:quinate 3-dehydrogenase (NAD+) activity"/>
    <property type="evidence" value="ECO:0007669"/>
    <property type="project" value="UniProtKB-UniRule"/>
</dbReference>
<dbReference type="GO" id="GO:0052733">
    <property type="term" value="F:quinate 3-dehydrogenase (NADP+) activity"/>
    <property type="evidence" value="ECO:0007669"/>
    <property type="project" value="InterPro"/>
</dbReference>
<dbReference type="GO" id="GO:0052734">
    <property type="term" value="F:shikimate 3-dehydrogenase (NAD+) activity"/>
    <property type="evidence" value="ECO:0007669"/>
    <property type="project" value="InterPro"/>
</dbReference>
<dbReference type="GO" id="GO:0004764">
    <property type="term" value="F:shikimate 3-dehydrogenase (NADP+) activity"/>
    <property type="evidence" value="ECO:0007669"/>
    <property type="project" value="UniProtKB-UniRule"/>
</dbReference>
<dbReference type="GO" id="GO:0008652">
    <property type="term" value="P:amino acid biosynthetic process"/>
    <property type="evidence" value="ECO:0007669"/>
    <property type="project" value="UniProtKB-KW"/>
</dbReference>
<dbReference type="GO" id="GO:0009073">
    <property type="term" value="P:aromatic amino acid family biosynthetic process"/>
    <property type="evidence" value="ECO:0007669"/>
    <property type="project" value="UniProtKB-KW"/>
</dbReference>
<dbReference type="GO" id="GO:0009423">
    <property type="term" value="P:chorismate biosynthetic process"/>
    <property type="evidence" value="ECO:0007669"/>
    <property type="project" value="UniProtKB-UniRule"/>
</dbReference>
<dbReference type="GO" id="GO:0019632">
    <property type="term" value="P:shikimate metabolic process"/>
    <property type="evidence" value="ECO:0007669"/>
    <property type="project" value="TreeGrafter"/>
</dbReference>
<dbReference type="CDD" id="cd01065">
    <property type="entry name" value="NAD_bind_Shikimate_DH"/>
    <property type="match status" value="1"/>
</dbReference>
<dbReference type="FunFam" id="3.40.50.10860:FF:000004">
    <property type="entry name" value="Quinate/shikimate dehydrogenase"/>
    <property type="match status" value="1"/>
</dbReference>
<dbReference type="FunFam" id="3.40.50.720:FF:000086">
    <property type="entry name" value="Quinate/shikimate dehydrogenase"/>
    <property type="match status" value="1"/>
</dbReference>
<dbReference type="Gene3D" id="3.40.50.10860">
    <property type="entry name" value="Leucine Dehydrogenase, chain A, domain 1"/>
    <property type="match status" value="1"/>
</dbReference>
<dbReference type="Gene3D" id="3.40.50.720">
    <property type="entry name" value="NAD(P)-binding Rossmann-like Domain"/>
    <property type="match status" value="1"/>
</dbReference>
<dbReference type="HAMAP" id="MF_00222">
    <property type="entry name" value="Shikimate_DH_AroE"/>
    <property type="match status" value="1"/>
</dbReference>
<dbReference type="HAMAP" id="MF_01578">
    <property type="entry name" value="Shikimate_DH_YdiB"/>
    <property type="match status" value="1"/>
</dbReference>
<dbReference type="InterPro" id="IPR046346">
    <property type="entry name" value="Aminoacid_DH-like_N_sf"/>
</dbReference>
<dbReference type="InterPro" id="IPR036291">
    <property type="entry name" value="NAD(P)-bd_dom_sf"/>
</dbReference>
<dbReference type="InterPro" id="IPR022872">
    <property type="entry name" value="Quinate/Shikimate_DH"/>
</dbReference>
<dbReference type="InterPro" id="IPR041121">
    <property type="entry name" value="SDH_C"/>
</dbReference>
<dbReference type="InterPro" id="IPR013708">
    <property type="entry name" value="Shikimate_DH-bd_N"/>
</dbReference>
<dbReference type="InterPro" id="IPR022893">
    <property type="entry name" value="Shikimate_DH_fam"/>
</dbReference>
<dbReference type="NCBIfam" id="NF009390">
    <property type="entry name" value="PRK12749.1"/>
    <property type="match status" value="1"/>
</dbReference>
<dbReference type="PANTHER" id="PTHR21089:SF1">
    <property type="entry name" value="BIFUNCTIONAL 3-DEHYDROQUINATE DEHYDRATASE_SHIKIMATE DEHYDROGENASE, CHLOROPLASTIC"/>
    <property type="match status" value="1"/>
</dbReference>
<dbReference type="PANTHER" id="PTHR21089">
    <property type="entry name" value="SHIKIMATE DEHYDROGENASE"/>
    <property type="match status" value="1"/>
</dbReference>
<dbReference type="Pfam" id="PF18317">
    <property type="entry name" value="SDH_C"/>
    <property type="match status" value="1"/>
</dbReference>
<dbReference type="Pfam" id="PF08501">
    <property type="entry name" value="Shikimate_dh_N"/>
    <property type="match status" value="1"/>
</dbReference>
<dbReference type="SUPFAM" id="SSF53223">
    <property type="entry name" value="Aminoacid dehydrogenase-like, N-terminal domain"/>
    <property type="match status" value="1"/>
</dbReference>
<dbReference type="SUPFAM" id="SSF51735">
    <property type="entry name" value="NAD(P)-binding Rossmann-fold domains"/>
    <property type="match status" value="1"/>
</dbReference>
<accession>B5YPX9</accession>
<sequence>MDVTAKYELIGLMAYPIRHSLSPEMQNKALEKAGLPFTYMAFEVDNDSFPGAIEGLKALKMRGTGVSMPNKQLACEYVDELTPAAKLVGAINTIVNDDGYLRGYNTDGTGHIRAIKESGFDIKGKTMVLLGAGGASTAIGAQGAIEGLKEIKLFNRRDKFFDKALAFAQRVNENTDCVVTVTDLADQQAFAEALASADILTNGTKVGMKPLENKSLVNDISLLHPGLLVTECVYNPHMTKLLQQAQQAGCKTIDGYGMLLWQGAEQFTLWTGKDFPLEYVKQVMGFGA</sequence>
<name>YDIB_ECO5E</name>
<feature type="chain" id="PRO_1000147548" description="Quinate/shikimate dehydrogenase">
    <location>
        <begin position="1"/>
        <end position="288"/>
    </location>
</feature>
<feature type="binding site" evidence="1">
    <location>
        <position position="71"/>
    </location>
    <ligand>
        <name>substrate</name>
    </ligand>
</feature>
<feature type="binding site" evidence="1">
    <location>
        <position position="107"/>
    </location>
    <ligand>
        <name>substrate</name>
    </ligand>
</feature>
<feature type="binding site" evidence="1">
    <location>
        <begin position="132"/>
        <end position="135"/>
    </location>
    <ligand>
        <name>NAD(+)</name>
        <dbReference type="ChEBI" id="CHEBI:57540"/>
    </ligand>
</feature>
<feature type="binding site" evidence="1">
    <location>
        <begin position="155"/>
        <end position="158"/>
    </location>
    <ligand>
        <name>NAD(+)</name>
        <dbReference type="ChEBI" id="CHEBI:57540"/>
    </ligand>
</feature>
<feature type="binding site" evidence="1">
    <location>
        <position position="205"/>
    </location>
    <ligand>
        <name>NAD(+)</name>
        <dbReference type="ChEBI" id="CHEBI:57540"/>
    </ligand>
</feature>
<feature type="binding site" evidence="1">
    <location>
        <begin position="232"/>
        <end position="235"/>
    </location>
    <ligand>
        <name>NAD(+)</name>
        <dbReference type="ChEBI" id="CHEBI:57540"/>
    </ligand>
</feature>
<feature type="binding site" evidence="1">
    <location>
        <position position="255"/>
    </location>
    <ligand>
        <name>NAD(+)</name>
        <dbReference type="ChEBI" id="CHEBI:57540"/>
    </ligand>
</feature>
<comment type="function">
    <text evidence="1">The actual biological function of YdiB remains unclear, nor is it known whether 3-dehydroshikimate or quinate represents the natural substrate. Catalyzes the reversible NAD-dependent reduction of both 3-dehydroshikimate (DHSA) and 3-dehydroquinate to yield shikimate (SA) and quinate, respectively. It can use both NAD or NADP for catalysis, however it has higher catalytic efficiency with NAD.</text>
</comment>
<comment type="catalytic activity">
    <reaction evidence="1">
        <text>L-quinate + NAD(+) = 3-dehydroquinate + NADH + H(+)</text>
        <dbReference type="Rhea" id="RHEA:22364"/>
        <dbReference type="ChEBI" id="CHEBI:15378"/>
        <dbReference type="ChEBI" id="CHEBI:29751"/>
        <dbReference type="ChEBI" id="CHEBI:32364"/>
        <dbReference type="ChEBI" id="CHEBI:57540"/>
        <dbReference type="ChEBI" id="CHEBI:57945"/>
        <dbReference type="EC" id="1.1.1.282"/>
    </reaction>
</comment>
<comment type="catalytic activity">
    <reaction evidence="1">
        <text>L-quinate + NADP(+) = 3-dehydroquinate + NADPH + H(+)</text>
        <dbReference type="Rhea" id="RHEA:18425"/>
        <dbReference type="ChEBI" id="CHEBI:15378"/>
        <dbReference type="ChEBI" id="CHEBI:29751"/>
        <dbReference type="ChEBI" id="CHEBI:32364"/>
        <dbReference type="ChEBI" id="CHEBI:57783"/>
        <dbReference type="ChEBI" id="CHEBI:58349"/>
        <dbReference type="EC" id="1.1.1.282"/>
    </reaction>
</comment>
<comment type="catalytic activity">
    <reaction evidence="1">
        <text>shikimate + NADP(+) = 3-dehydroshikimate + NADPH + H(+)</text>
        <dbReference type="Rhea" id="RHEA:17737"/>
        <dbReference type="ChEBI" id="CHEBI:15378"/>
        <dbReference type="ChEBI" id="CHEBI:16630"/>
        <dbReference type="ChEBI" id="CHEBI:36208"/>
        <dbReference type="ChEBI" id="CHEBI:57783"/>
        <dbReference type="ChEBI" id="CHEBI:58349"/>
        <dbReference type="EC" id="1.1.1.282"/>
    </reaction>
</comment>
<comment type="catalytic activity">
    <reaction evidence="1">
        <text>shikimate + NAD(+) = 3-dehydroshikimate + NADH + H(+)</text>
        <dbReference type="Rhea" id="RHEA:17741"/>
        <dbReference type="ChEBI" id="CHEBI:15378"/>
        <dbReference type="ChEBI" id="CHEBI:16630"/>
        <dbReference type="ChEBI" id="CHEBI:36208"/>
        <dbReference type="ChEBI" id="CHEBI:57540"/>
        <dbReference type="ChEBI" id="CHEBI:57945"/>
        <dbReference type="EC" id="1.1.1.282"/>
    </reaction>
</comment>
<comment type="pathway">
    <text evidence="1">Metabolic intermediate biosynthesis; chorismate biosynthesis; chorismate from D-erythrose 4-phosphate and phosphoenolpyruvate: step 4/7.</text>
</comment>
<comment type="subunit">
    <text evidence="1">Homodimer.</text>
</comment>
<comment type="similarity">
    <text evidence="1">Belongs to the shikimate dehydrogenase family.</text>
</comment>
<proteinExistence type="inferred from homology"/>
<organism>
    <name type="scientific">Escherichia coli O157:H7 (strain EC4115 / EHEC)</name>
    <dbReference type="NCBI Taxonomy" id="444450"/>
    <lineage>
        <taxon>Bacteria</taxon>
        <taxon>Pseudomonadati</taxon>
        <taxon>Pseudomonadota</taxon>
        <taxon>Gammaproteobacteria</taxon>
        <taxon>Enterobacterales</taxon>
        <taxon>Enterobacteriaceae</taxon>
        <taxon>Escherichia</taxon>
    </lineage>
</organism>
<gene>
    <name evidence="1" type="primary">ydiB</name>
    <name type="ordered locus">ECH74115_2408</name>
</gene>
<protein>
    <recommendedName>
        <fullName evidence="1">Quinate/shikimate dehydrogenase</fullName>
        <ecNumber evidence="1">1.1.1.282</ecNumber>
    </recommendedName>
    <alternativeName>
        <fullName evidence="1">NAD-dependent shikimate 5-dehydrogenase</fullName>
    </alternativeName>
</protein>